<keyword id="KW-0025">Alternative splicing</keyword>
<keyword id="KW-0256">Endoplasmic reticulum</keyword>
<keyword id="KW-0551">Lipid droplet</keyword>
<keyword id="KW-0443">Lipid metabolism</keyword>
<keyword id="KW-0597">Phosphoprotein</keyword>
<keyword id="KW-1185">Reference proteome</keyword>
<proteinExistence type="evidence at protein level"/>
<reference key="1">
    <citation type="journal article" date="2001" name="Mamm. Genome">
        <title>The murine perilipin gene: the lipid droplet-associated perilipins derive from tissue-specific, mRNA splice variants and define a gene family of ancient origin.</title>
        <authorList>
            <person name="Lu X."/>
            <person name="Gruia-Gray J."/>
            <person name="Copeland N.G."/>
            <person name="Gilbert D.J."/>
            <person name="Jenkins N.A."/>
            <person name="Londos C."/>
            <person name="Kimmel A.R."/>
        </authorList>
    </citation>
    <scope>NUCLEOTIDE SEQUENCE [MRNA] (ISOFORMS 1; 2; 3 AND 4)</scope>
</reference>
<reference key="2">
    <citation type="submission" date="2002-10" db="EMBL/GenBank/DDBJ databases">
        <title>Mouse perilipin.</title>
        <authorList>
            <person name="Tansey J.T."/>
            <person name="Lu X."/>
            <person name="Londos C."/>
            <person name="Kimmel A.R."/>
        </authorList>
    </citation>
    <scope>NUCLEOTIDE SEQUENCE [MRNA] (ISOFORM 1)</scope>
</reference>
<reference key="3">
    <citation type="journal article" date="2005" name="Science">
        <title>The transcriptional landscape of the mammalian genome.</title>
        <authorList>
            <person name="Carninci P."/>
            <person name="Kasukawa T."/>
            <person name="Katayama S."/>
            <person name="Gough J."/>
            <person name="Frith M.C."/>
            <person name="Maeda N."/>
            <person name="Oyama R."/>
            <person name="Ravasi T."/>
            <person name="Lenhard B."/>
            <person name="Wells C."/>
            <person name="Kodzius R."/>
            <person name="Shimokawa K."/>
            <person name="Bajic V.B."/>
            <person name="Brenner S.E."/>
            <person name="Batalov S."/>
            <person name="Forrest A.R."/>
            <person name="Zavolan M."/>
            <person name="Davis M.J."/>
            <person name="Wilming L.G."/>
            <person name="Aidinis V."/>
            <person name="Allen J.E."/>
            <person name="Ambesi-Impiombato A."/>
            <person name="Apweiler R."/>
            <person name="Aturaliya R.N."/>
            <person name="Bailey T.L."/>
            <person name="Bansal M."/>
            <person name="Baxter L."/>
            <person name="Beisel K.W."/>
            <person name="Bersano T."/>
            <person name="Bono H."/>
            <person name="Chalk A.M."/>
            <person name="Chiu K.P."/>
            <person name="Choudhary V."/>
            <person name="Christoffels A."/>
            <person name="Clutterbuck D.R."/>
            <person name="Crowe M.L."/>
            <person name="Dalla E."/>
            <person name="Dalrymple B.P."/>
            <person name="de Bono B."/>
            <person name="Della Gatta G."/>
            <person name="di Bernardo D."/>
            <person name="Down T."/>
            <person name="Engstrom P."/>
            <person name="Fagiolini M."/>
            <person name="Faulkner G."/>
            <person name="Fletcher C.F."/>
            <person name="Fukushima T."/>
            <person name="Furuno M."/>
            <person name="Futaki S."/>
            <person name="Gariboldi M."/>
            <person name="Georgii-Hemming P."/>
            <person name="Gingeras T.R."/>
            <person name="Gojobori T."/>
            <person name="Green R.E."/>
            <person name="Gustincich S."/>
            <person name="Harbers M."/>
            <person name="Hayashi Y."/>
            <person name="Hensch T.K."/>
            <person name="Hirokawa N."/>
            <person name="Hill D."/>
            <person name="Huminiecki L."/>
            <person name="Iacono M."/>
            <person name="Ikeo K."/>
            <person name="Iwama A."/>
            <person name="Ishikawa T."/>
            <person name="Jakt M."/>
            <person name="Kanapin A."/>
            <person name="Katoh M."/>
            <person name="Kawasawa Y."/>
            <person name="Kelso J."/>
            <person name="Kitamura H."/>
            <person name="Kitano H."/>
            <person name="Kollias G."/>
            <person name="Krishnan S.P."/>
            <person name="Kruger A."/>
            <person name="Kummerfeld S.K."/>
            <person name="Kurochkin I.V."/>
            <person name="Lareau L.F."/>
            <person name="Lazarevic D."/>
            <person name="Lipovich L."/>
            <person name="Liu J."/>
            <person name="Liuni S."/>
            <person name="McWilliam S."/>
            <person name="Madan Babu M."/>
            <person name="Madera M."/>
            <person name="Marchionni L."/>
            <person name="Matsuda H."/>
            <person name="Matsuzawa S."/>
            <person name="Miki H."/>
            <person name="Mignone F."/>
            <person name="Miyake S."/>
            <person name="Morris K."/>
            <person name="Mottagui-Tabar S."/>
            <person name="Mulder N."/>
            <person name="Nakano N."/>
            <person name="Nakauchi H."/>
            <person name="Ng P."/>
            <person name="Nilsson R."/>
            <person name="Nishiguchi S."/>
            <person name="Nishikawa S."/>
            <person name="Nori F."/>
            <person name="Ohara O."/>
            <person name="Okazaki Y."/>
            <person name="Orlando V."/>
            <person name="Pang K.C."/>
            <person name="Pavan W.J."/>
            <person name="Pavesi G."/>
            <person name="Pesole G."/>
            <person name="Petrovsky N."/>
            <person name="Piazza S."/>
            <person name="Reed J."/>
            <person name="Reid J.F."/>
            <person name="Ring B.Z."/>
            <person name="Ringwald M."/>
            <person name="Rost B."/>
            <person name="Ruan Y."/>
            <person name="Salzberg S.L."/>
            <person name="Sandelin A."/>
            <person name="Schneider C."/>
            <person name="Schoenbach C."/>
            <person name="Sekiguchi K."/>
            <person name="Semple C.A."/>
            <person name="Seno S."/>
            <person name="Sessa L."/>
            <person name="Sheng Y."/>
            <person name="Shibata Y."/>
            <person name="Shimada H."/>
            <person name="Shimada K."/>
            <person name="Silva D."/>
            <person name="Sinclair B."/>
            <person name="Sperling S."/>
            <person name="Stupka E."/>
            <person name="Sugiura K."/>
            <person name="Sultana R."/>
            <person name="Takenaka Y."/>
            <person name="Taki K."/>
            <person name="Tammoja K."/>
            <person name="Tan S.L."/>
            <person name="Tang S."/>
            <person name="Taylor M.S."/>
            <person name="Tegner J."/>
            <person name="Teichmann S.A."/>
            <person name="Ueda H.R."/>
            <person name="van Nimwegen E."/>
            <person name="Verardo R."/>
            <person name="Wei C.L."/>
            <person name="Yagi K."/>
            <person name="Yamanishi H."/>
            <person name="Zabarovsky E."/>
            <person name="Zhu S."/>
            <person name="Zimmer A."/>
            <person name="Hide W."/>
            <person name="Bult C."/>
            <person name="Grimmond S.M."/>
            <person name="Teasdale R.D."/>
            <person name="Liu E.T."/>
            <person name="Brusic V."/>
            <person name="Quackenbush J."/>
            <person name="Wahlestedt C."/>
            <person name="Mattick J.S."/>
            <person name="Hume D.A."/>
            <person name="Kai C."/>
            <person name="Sasaki D."/>
            <person name="Tomaru Y."/>
            <person name="Fukuda S."/>
            <person name="Kanamori-Katayama M."/>
            <person name="Suzuki M."/>
            <person name="Aoki J."/>
            <person name="Arakawa T."/>
            <person name="Iida J."/>
            <person name="Imamura K."/>
            <person name="Itoh M."/>
            <person name="Kato T."/>
            <person name="Kawaji H."/>
            <person name="Kawagashira N."/>
            <person name="Kawashima T."/>
            <person name="Kojima M."/>
            <person name="Kondo S."/>
            <person name="Konno H."/>
            <person name="Nakano K."/>
            <person name="Ninomiya N."/>
            <person name="Nishio T."/>
            <person name="Okada M."/>
            <person name="Plessy C."/>
            <person name="Shibata K."/>
            <person name="Shiraki T."/>
            <person name="Suzuki S."/>
            <person name="Tagami M."/>
            <person name="Waki K."/>
            <person name="Watahiki A."/>
            <person name="Okamura-Oho Y."/>
            <person name="Suzuki H."/>
            <person name="Kawai J."/>
            <person name="Hayashizaki Y."/>
        </authorList>
    </citation>
    <scope>NUCLEOTIDE SEQUENCE [LARGE SCALE MRNA] (ISOFORM 1)</scope>
    <source>
        <strain>C57BL/6J</strain>
        <tissue>Testis</tissue>
    </source>
</reference>
<reference key="4">
    <citation type="submission" date="2005-09" db="EMBL/GenBank/DDBJ databases">
        <authorList>
            <person name="Mural R.J."/>
            <person name="Adams M.D."/>
            <person name="Myers E.W."/>
            <person name="Smith H.O."/>
            <person name="Venter J.C."/>
        </authorList>
    </citation>
    <scope>NUCLEOTIDE SEQUENCE [LARGE SCALE GENOMIC DNA]</scope>
</reference>
<reference key="5">
    <citation type="journal article" date="2004" name="Genome Res.">
        <title>The status, quality, and expansion of the NIH full-length cDNA project: the Mammalian Gene Collection (MGC).</title>
        <authorList>
            <consortium name="The MGC Project Team"/>
        </authorList>
    </citation>
    <scope>NUCLEOTIDE SEQUENCE [LARGE SCALE MRNA] (ISOFORM 1)</scope>
    <source>
        <strain>C57BL/6J</strain>
        <tissue>Mammary gland</tissue>
    </source>
</reference>
<reference key="6">
    <citation type="journal article" date="2004" name="J. Biol. Chem.">
        <title>Perilipin A mediates the reversible binding of CGI-58 to lipid droplets in 3T3-L1 adipocytes.</title>
        <authorList>
            <person name="Subramanian V."/>
            <person name="Rothenberg A."/>
            <person name="Gomez C."/>
            <person name="Cohen A.W."/>
            <person name="Garcia A."/>
            <person name="Bhattacharyya S."/>
            <person name="Shapiro L."/>
            <person name="Dolios G."/>
            <person name="Wang R."/>
            <person name="Lisanti M.P."/>
            <person name="Brasaemle D.L."/>
        </authorList>
    </citation>
    <scope>INTERACTION WITH ABHD5</scope>
</reference>
<reference key="7">
    <citation type="journal article" date="2009" name="Proteomics">
        <title>The stoichiometry of protein phosphorylation in adipocyte lipid droplets: analysis by N-terminal isotope tagging and enzymatic dephosphorylation.</title>
        <authorList>
            <person name="Kanshin E."/>
            <person name="Wang S."/>
            <person name="Ashmarina L."/>
            <person name="Fedjaev M."/>
            <person name="Nifant'ev I."/>
            <person name="Mitchell G.A."/>
            <person name="Pshezhetsky A.V."/>
        </authorList>
    </citation>
    <scope>PHOSPHORYLATION AT SER-410 AND SER-460</scope>
</reference>
<reference key="8">
    <citation type="journal article" date="2010" name="Cell">
        <title>A tissue-specific atlas of mouse protein phosphorylation and expression.</title>
        <authorList>
            <person name="Huttlin E.L."/>
            <person name="Jedrychowski M.P."/>
            <person name="Elias J.E."/>
            <person name="Goswami T."/>
            <person name="Rad R."/>
            <person name="Beausoleil S.A."/>
            <person name="Villen J."/>
            <person name="Haas W."/>
            <person name="Sowa M.E."/>
            <person name="Gygi S.P."/>
        </authorList>
    </citation>
    <scope>PHOSPHORYLATION [LARGE SCALE ANALYSIS] AT SER-81; THR-85; SER-126; SER-130; SER-132; SER-137; SER-174; THR-223; SER-384; SER-410; SER-492 AND SER-494</scope>
    <scope>IDENTIFICATION BY MASS SPECTROMETRY [LARGE SCALE ANALYSIS]</scope>
    <source>
        <tissue>Brown adipose tissue</tissue>
        <tissue>Heart</tissue>
        <tissue>Kidney</tissue>
        <tissue>Lung</tissue>
        <tissue>Pancreas</tissue>
        <tissue>Spleen</tissue>
        <tissue>Testis</tissue>
    </source>
</reference>
<reference key="9">
    <citation type="journal article" date="2013" name="Nat. Commun.">
        <title>Perilipin1 promotes unilocular lipid droplet formation through the activation of Fsp27 in adipocytes.</title>
        <authorList>
            <person name="Sun Z."/>
            <person name="Gong J."/>
            <person name="Wu H."/>
            <person name="Xu W."/>
            <person name="Wu L."/>
            <person name="Xu D."/>
            <person name="Gao J."/>
            <person name="Wu J.W."/>
            <person name="Yang H."/>
            <person name="Yang M."/>
            <person name="Li P."/>
        </authorList>
    </citation>
    <scope>FUNCTION IN UNILOCULAR LIPID DROPLET FORMATION AND LIPOLYSIS</scope>
    <scope>INTERACTION WITH CIDEC</scope>
    <scope>SUBCELLULAR LOCATION</scope>
</reference>
<reference key="10">
    <citation type="journal article" date="2014" name="PLoS ONE">
        <title>Phospholipase C-related catalytically inactive protein (PRIP) regulates lipolysis in adipose tissue by modulating the phosphorylation of hormone-sensitive lipase.</title>
        <authorList>
            <person name="Okumura T."/>
            <person name="Harada K."/>
            <person name="Oue K."/>
            <person name="Zhang J."/>
            <person name="Asano S."/>
            <person name="Hayashiuchi M."/>
            <person name="Mizokami A."/>
            <person name="Tanaka H."/>
            <person name="Irifune M."/>
            <person name="Kamata N."/>
            <person name="Hirata M."/>
            <person name="Kanematsu T."/>
        </authorList>
    </citation>
    <scope>SUBCELLULAR LOCATION</scope>
    <scope>PHOSPHORYLATION AT SER-492</scope>
</reference>
<gene>
    <name type="primary">Plin1</name>
    <name type="synonym">Peri</name>
    <name type="synonym">Plin</name>
</gene>
<organism>
    <name type="scientific">Mus musculus</name>
    <name type="common">Mouse</name>
    <dbReference type="NCBI Taxonomy" id="10090"/>
    <lineage>
        <taxon>Eukaryota</taxon>
        <taxon>Metazoa</taxon>
        <taxon>Chordata</taxon>
        <taxon>Craniata</taxon>
        <taxon>Vertebrata</taxon>
        <taxon>Euteleostomi</taxon>
        <taxon>Mammalia</taxon>
        <taxon>Eutheria</taxon>
        <taxon>Euarchontoglires</taxon>
        <taxon>Glires</taxon>
        <taxon>Rodentia</taxon>
        <taxon>Myomorpha</taxon>
        <taxon>Muroidea</taxon>
        <taxon>Muridae</taxon>
        <taxon>Murinae</taxon>
        <taxon>Mus</taxon>
        <taxon>Mus</taxon>
    </lineage>
</organism>
<protein>
    <recommendedName>
        <fullName>Perilipin-1</fullName>
    </recommendedName>
    <alternativeName>
        <fullName>Lipid droplet-associated protein</fullName>
    </alternativeName>
    <alternativeName>
        <fullName>Perilipin A</fullName>
    </alternativeName>
</protein>
<feature type="chain" id="PRO_0000099885" description="Perilipin-1">
    <location>
        <begin position="1"/>
        <end position="517"/>
    </location>
</feature>
<feature type="region of interest" description="Disordered" evidence="4">
    <location>
        <begin position="195"/>
        <end position="216"/>
    </location>
</feature>
<feature type="region of interest" description="Disordered" evidence="4">
    <location>
        <begin position="286"/>
        <end position="320"/>
    </location>
</feature>
<feature type="region of interest" description="Required for interaction with CIDEC" evidence="7">
    <location>
        <begin position="290"/>
        <end position="321"/>
    </location>
</feature>
<feature type="region of interest" description="Disordered" evidence="4">
    <location>
        <begin position="425"/>
        <end position="490"/>
    </location>
</feature>
<feature type="compositionally biased region" description="Acidic residues" evidence="4">
    <location>
        <begin position="298"/>
        <end position="318"/>
    </location>
</feature>
<feature type="modified residue" description="Phosphoserine" evidence="11">
    <location>
        <position position="81"/>
    </location>
</feature>
<feature type="modified residue" description="Phosphothreonine" evidence="11">
    <location>
        <position position="85"/>
    </location>
</feature>
<feature type="modified residue" description="Phosphoserine" evidence="11">
    <location>
        <position position="126"/>
    </location>
</feature>
<feature type="modified residue" description="Phosphoserine" evidence="11">
    <location>
        <position position="130"/>
    </location>
</feature>
<feature type="modified residue" description="Phosphoserine" evidence="11">
    <location>
        <position position="132"/>
    </location>
</feature>
<feature type="modified residue" description="Phosphoserine" evidence="11">
    <location>
        <position position="137"/>
    </location>
</feature>
<feature type="modified residue" description="Phosphoserine" evidence="11">
    <location>
        <position position="174"/>
    </location>
</feature>
<feature type="modified residue" description="Phosphothreonine" evidence="11">
    <location>
        <position position="223"/>
    </location>
</feature>
<feature type="modified residue" description="Phosphothreonine" evidence="3">
    <location>
        <position position="298"/>
    </location>
</feature>
<feature type="modified residue" description="Phosphothreonine" evidence="3">
    <location>
        <position position="300"/>
    </location>
</feature>
<feature type="modified residue" description="Phosphoserine" evidence="3">
    <location>
        <position position="314"/>
    </location>
</feature>
<feature type="modified residue" description="Phosphoserine" evidence="11">
    <location>
        <position position="384"/>
    </location>
</feature>
<feature type="modified residue" description="Phosphoserine" evidence="3">
    <location>
        <position position="386"/>
    </location>
</feature>
<feature type="modified residue" description="Phosphoserine" evidence="6 11">
    <location>
        <position position="410"/>
    </location>
</feature>
<feature type="modified residue" description="Phosphoserine" evidence="2">
    <location>
        <position position="433"/>
    </location>
</feature>
<feature type="modified residue" description="Phosphoserine" evidence="3">
    <location>
        <position position="439"/>
    </location>
</feature>
<feature type="modified residue" description="Phosphoserine" evidence="6">
    <location>
        <position position="460"/>
    </location>
</feature>
<feature type="modified residue" description="Phosphoserine" evidence="8 11">
    <location>
        <position position="492"/>
    </location>
</feature>
<feature type="modified residue" description="Phosphoserine" evidence="11">
    <location>
        <position position="494"/>
    </location>
</feature>
<feature type="splice variant" id="VSP_038204" description="In isoform 4." evidence="9">
    <original>APSSGRQRTQKAPKAKPSLVRRVSTLANTLSRHTMQTTAWALKQGH</original>
    <variation>GICHPDWLAILGARWPLSTRGSVGGIQVLLALLWDRGYPSASSGNS</variation>
    <location>
        <begin position="199"/>
        <end position="244"/>
    </location>
</feature>
<feature type="splice variant" id="VSP_038205" description="In isoform 4." evidence="9">
    <location>
        <begin position="245"/>
        <end position="517"/>
    </location>
</feature>
<feature type="splice variant" id="VSP_038206" description="In isoform 3." evidence="9">
    <original>ALPNPRGLLGGVVHTVQNTLRN</original>
    <variation>KTESPRPHSPRLGGEKEGNGIE</variation>
    <location>
        <begin position="326"/>
        <end position="347"/>
    </location>
</feature>
<feature type="splice variant" id="VSP_038207" description="In isoform 3." evidence="9">
    <location>
        <begin position="348"/>
        <end position="517"/>
    </location>
</feature>
<feature type="splice variant" id="VSP_038208" description="In isoform 2." evidence="9">
    <original>LPRLSLMEPESEFRDI</original>
    <variation>VSPAPGAPSDSQGFRD</variation>
    <location>
        <begin position="406"/>
        <end position="421"/>
    </location>
</feature>
<feature type="splice variant" id="VSP_038209" description="In isoform 2." evidence="9">
    <location>
        <begin position="422"/>
        <end position="517"/>
    </location>
</feature>
<feature type="sequence conflict" description="In Ref. 2; AAN77870." evidence="10" ref="2">
    <original>M</original>
    <variation>I</variation>
    <location>
        <position position="3"/>
    </location>
</feature>
<feature type="sequence conflict" description="In Ref. 3; BAC27409." evidence="10" ref="3">
    <original>E</original>
    <variation>D</variation>
    <location>
        <position position="317"/>
    </location>
</feature>
<name>PLIN1_MOUSE</name>
<comment type="function">
    <text evidence="1 7">Modulator of adipocyte lipid metabolism. Coats lipid storage droplets to protect them from breakdown by hormone-sensitive lipase (HSL). Its absence may result in leanness (By similarity). Plays a role in unilocular lipid droplet formation by activating CIDEC. Their interaction promotes lipid droplet enlargement and directional net neutral lipid transfer. May modulate lipolysis and triglyceride levels.</text>
</comment>
<comment type="subunit">
    <text evidence="2 5 7">Interacts with ABHD5 (PubMed:15292255). Interacts with CIDEC (PubMed:23481402). Interacts with AQP7 (By similarity).</text>
</comment>
<comment type="subcellular location">
    <subcellularLocation>
        <location evidence="2">Endoplasmic reticulum</location>
    </subcellularLocation>
    <subcellularLocation>
        <location evidence="7 8">Lipid droplet</location>
    </subcellularLocation>
    <text evidence="2">Lipid droplet surface-associated.</text>
</comment>
<comment type="alternative products">
    <event type="alternative splicing"/>
    <isoform>
        <id>Q8CGN5-1</id>
        <name>1</name>
        <name>Peri A</name>
        <sequence type="displayed"/>
    </isoform>
    <isoform>
        <id>Q8CGN5-2</id>
        <name>2</name>
        <name>Peri B</name>
        <sequence type="described" ref="VSP_038208 VSP_038209"/>
    </isoform>
    <isoform>
        <id>Q8CGN5-3</id>
        <name>3</name>
        <name>Peri C</name>
        <sequence type="described" ref="VSP_038206 VSP_038207"/>
    </isoform>
    <isoform>
        <id>Q8CGN5-4</id>
        <name>4</name>
        <name>Peri D</name>
        <sequence type="described" ref="VSP_038204 VSP_038205"/>
    </isoform>
</comment>
<comment type="PTM">
    <text evidence="1">Major cAMP-dependent protein kinase-substrate in adipocytes, also dephosphorylated by PP1. When phosphorylated, may be maximally sensitive to HSL and when unphosphorylated, may play a role in the inhibition of lipolysis, by acting as a barrier in lipid droplet (By similarity).</text>
</comment>
<comment type="similarity">
    <text evidence="10">Belongs to the perilipin family.</text>
</comment>
<comment type="online information" name="Protein Spotlight">
    <link uri="https://www.proteinspotlight.org/back_issues/010"/>
    <text>Fat, wonderful fat - Issue 10 of May 2001</text>
</comment>
<evidence type="ECO:0000250" key="1"/>
<evidence type="ECO:0000250" key="2">
    <source>
        <dbReference type="UniProtKB" id="O60240"/>
    </source>
</evidence>
<evidence type="ECO:0000250" key="3">
    <source>
        <dbReference type="UniProtKB" id="P43884"/>
    </source>
</evidence>
<evidence type="ECO:0000256" key="4">
    <source>
        <dbReference type="SAM" id="MobiDB-lite"/>
    </source>
</evidence>
<evidence type="ECO:0000269" key="5">
    <source>
    </source>
</evidence>
<evidence type="ECO:0000269" key="6">
    <source>
    </source>
</evidence>
<evidence type="ECO:0000269" key="7">
    <source>
    </source>
</evidence>
<evidence type="ECO:0000269" key="8">
    <source>
    </source>
</evidence>
<evidence type="ECO:0000303" key="9">
    <source>
    </source>
</evidence>
<evidence type="ECO:0000305" key="10"/>
<evidence type="ECO:0007744" key="11">
    <source>
    </source>
</evidence>
<sequence length="517" mass="55596">MSMNKGPTLLDGDLPEQENVLQRVLQLPVVSGTCECFQKTYNSTKEAHPLVASVCNAYEKGVQGASNLAAWSMEPVVRRLSTQFTAANELACRGLDHLEEKIPALQYPPEKIASELKGTISTRLRSARNSISVPIASTSDKVLGATLAGCELALGMAKETAEYAANTRVGRLASGGADLALGSIEKVVEFLLPPDKESAPSSGRQRTQKAPKAKPSLVRRVSTLANTLSRHTMQTTAWALKQGHSLAMWIPGVAPLSSLAQWGASAAMQVVSRRQSEVRVPWLHNLAASQDESHDDQTDTEGEETDDEEEEEESEAEENVLREVTALPNPRGLLGGVVHTVQNTLRNTISAVTWAPAAVLGTVGRILHLTPAQAVSSTKGRAMSLSDALKGVTDNVVDTVVHYVPLPRLSLMEPESEFRDIDNPSAEAERKGSGARPASPESTPRPGQPRGSLRSVRGLSAPSCPGLDDKTEASARPGFLAMPREKPARRVSDSFFRPSVMEPILGRAQYSQLRKKS</sequence>
<dbReference type="EMBL" id="AY161165">
    <property type="protein sequence ID" value="AAN77870.1"/>
    <property type="molecule type" value="mRNA"/>
</dbReference>
<dbReference type="EMBL" id="AK031445">
    <property type="protein sequence ID" value="BAC27409.1"/>
    <property type="molecule type" value="mRNA"/>
</dbReference>
<dbReference type="EMBL" id="CH466543">
    <property type="protein sequence ID" value="EDL07055.1"/>
    <property type="molecule type" value="Genomic_DNA"/>
</dbReference>
<dbReference type="EMBL" id="BC096685">
    <property type="protein sequence ID" value="AAH96685.1"/>
    <property type="molecule type" value="mRNA"/>
</dbReference>
<dbReference type="CCDS" id="CCDS21385.1">
    <molecule id="Q8CGN5-1"/>
</dbReference>
<dbReference type="RefSeq" id="NP_001106942.1">
    <molecule id="Q8CGN5-1"/>
    <property type="nucleotide sequence ID" value="NM_001113471.1"/>
</dbReference>
<dbReference type="RefSeq" id="NP_783571.2">
    <molecule id="Q8CGN5-1"/>
    <property type="nucleotide sequence ID" value="NM_175640.2"/>
</dbReference>
<dbReference type="RefSeq" id="XP_011249078.1">
    <molecule id="Q8CGN5-1"/>
    <property type="nucleotide sequence ID" value="XM_011250776.3"/>
</dbReference>
<dbReference type="BioGRID" id="222244">
    <property type="interactions" value="1"/>
</dbReference>
<dbReference type="FunCoup" id="Q8CGN5">
    <property type="interactions" value="291"/>
</dbReference>
<dbReference type="STRING" id="10090.ENSMUSP00000146028"/>
<dbReference type="GlyGen" id="Q8CGN5">
    <property type="glycosylation" value="2 sites, 1 O-linked glycan (2 sites)"/>
</dbReference>
<dbReference type="iPTMnet" id="Q8CGN5"/>
<dbReference type="PhosphoSitePlus" id="Q8CGN5"/>
<dbReference type="SwissPalm" id="Q8CGN5"/>
<dbReference type="jPOST" id="Q8CGN5"/>
<dbReference type="PaxDb" id="10090-ENSMUSP00000032762"/>
<dbReference type="PeptideAtlas" id="Q8CGN5"/>
<dbReference type="ProteomicsDB" id="289682">
    <molecule id="Q8CGN5-1"/>
</dbReference>
<dbReference type="ProteomicsDB" id="289683">
    <molecule id="Q8CGN5-2"/>
</dbReference>
<dbReference type="ProteomicsDB" id="289684">
    <molecule id="Q8CGN5-3"/>
</dbReference>
<dbReference type="ProteomicsDB" id="289685">
    <molecule id="Q8CGN5-4"/>
</dbReference>
<dbReference type="Antibodypedia" id="15811">
    <property type="antibodies" value="384 antibodies from 37 providers"/>
</dbReference>
<dbReference type="DNASU" id="103968"/>
<dbReference type="Ensembl" id="ENSMUST00000032762.14">
    <molecule id="Q8CGN5-1"/>
    <property type="protein sequence ID" value="ENSMUSP00000032762.8"/>
    <property type="gene ID" value="ENSMUSG00000030546.15"/>
</dbReference>
<dbReference type="Ensembl" id="ENSMUST00000178257.3">
    <molecule id="Q8CGN5-1"/>
    <property type="protein sequence ID" value="ENSMUSP00000136996.2"/>
    <property type="gene ID" value="ENSMUSG00000030546.15"/>
</dbReference>
<dbReference type="Ensembl" id="ENSMUST00000205915.2">
    <molecule id="Q8CGN5-1"/>
    <property type="protein sequence ID" value="ENSMUSP00000146028.2"/>
    <property type="gene ID" value="ENSMUSG00000030546.15"/>
</dbReference>
<dbReference type="GeneID" id="103968"/>
<dbReference type="KEGG" id="mmu:103968"/>
<dbReference type="UCSC" id="uc009hyu.2">
    <molecule id="Q8CGN5-1"/>
    <property type="organism name" value="mouse"/>
</dbReference>
<dbReference type="UCSC" id="uc009hyw.1">
    <molecule id="Q8CGN5-3"/>
    <property type="organism name" value="mouse"/>
</dbReference>
<dbReference type="AGR" id="MGI:1890505"/>
<dbReference type="CTD" id="5346"/>
<dbReference type="MGI" id="MGI:1890505">
    <property type="gene designation" value="Plin1"/>
</dbReference>
<dbReference type="VEuPathDB" id="HostDB:ENSMUSG00000030546"/>
<dbReference type="eggNOG" id="ENOG502RY3Q">
    <property type="taxonomic scope" value="Eukaryota"/>
</dbReference>
<dbReference type="GeneTree" id="ENSGT00950000182920"/>
<dbReference type="HOGENOM" id="CLU_037212_1_0_1"/>
<dbReference type="InParanoid" id="Q8CGN5"/>
<dbReference type="OMA" id="LAMWSVE"/>
<dbReference type="OrthoDB" id="376826at2759"/>
<dbReference type="PhylomeDB" id="Q8CGN5"/>
<dbReference type="TreeFam" id="TF325901"/>
<dbReference type="BioGRID-ORCS" id="103968">
    <property type="hits" value="1 hit in 79 CRISPR screens"/>
</dbReference>
<dbReference type="PRO" id="PR:Q8CGN5"/>
<dbReference type="Proteomes" id="UP000000589">
    <property type="component" value="Chromosome 7"/>
</dbReference>
<dbReference type="RNAct" id="Q8CGN5">
    <property type="molecule type" value="protein"/>
</dbReference>
<dbReference type="Bgee" id="ENSMUSG00000030546">
    <property type="expression patterns" value="Expressed in epididymal fat pad and 79 other cell types or tissues"/>
</dbReference>
<dbReference type="ExpressionAtlas" id="Q8CGN5">
    <property type="expression patterns" value="baseline and differential"/>
</dbReference>
<dbReference type="GO" id="GO:0005829">
    <property type="term" value="C:cytosol"/>
    <property type="evidence" value="ECO:0000314"/>
    <property type="project" value="MGI"/>
</dbReference>
<dbReference type="GO" id="GO:0005783">
    <property type="term" value="C:endoplasmic reticulum"/>
    <property type="evidence" value="ECO:0007669"/>
    <property type="project" value="UniProtKB-SubCell"/>
</dbReference>
<dbReference type="GO" id="GO:0005811">
    <property type="term" value="C:lipid droplet"/>
    <property type="evidence" value="ECO:0000314"/>
    <property type="project" value="MGI"/>
</dbReference>
<dbReference type="GO" id="GO:0070417">
    <property type="term" value="P:cellular response to cold"/>
    <property type="evidence" value="ECO:0000314"/>
    <property type="project" value="MGI"/>
</dbReference>
<dbReference type="GO" id="GO:0016042">
    <property type="term" value="P:lipid catabolic process"/>
    <property type="evidence" value="ECO:0000315"/>
    <property type="project" value="MGI"/>
</dbReference>
<dbReference type="InterPro" id="IPR004279">
    <property type="entry name" value="Perilipin"/>
</dbReference>
<dbReference type="InterPro" id="IPR042998">
    <property type="entry name" value="PLIN1"/>
</dbReference>
<dbReference type="PANTHER" id="PTHR47138">
    <property type="entry name" value="PERILIPIN-1"/>
    <property type="match status" value="1"/>
</dbReference>
<dbReference type="PANTHER" id="PTHR47138:SF1">
    <property type="entry name" value="PERILIPIN-1"/>
    <property type="match status" value="1"/>
</dbReference>
<dbReference type="Pfam" id="PF03036">
    <property type="entry name" value="Perilipin"/>
    <property type="match status" value="1"/>
</dbReference>
<dbReference type="PIRSF" id="PIRSF036881">
    <property type="entry name" value="PAT"/>
    <property type="match status" value="1"/>
</dbReference>
<accession>Q8CGN5</accession>
<accession>Q4V9U2</accession>
<accession>Q8C0F5</accession>